<organism>
    <name type="scientific">Dictyostelium discoideum</name>
    <name type="common">Social amoeba</name>
    <dbReference type="NCBI Taxonomy" id="44689"/>
    <lineage>
        <taxon>Eukaryota</taxon>
        <taxon>Amoebozoa</taxon>
        <taxon>Evosea</taxon>
        <taxon>Eumycetozoa</taxon>
        <taxon>Dictyostelia</taxon>
        <taxon>Dictyosteliales</taxon>
        <taxon>Dictyosteliaceae</taxon>
        <taxon>Dictyostelium</taxon>
    </lineage>
</organism>
<comment type="function">
    <text evidence="1">TFIIF is a general transcription initiation factor that binds to RNA polymerase II and helps to recruit it to the initiation complex in collaboration with TFIIB. It promotes transcription elongation (By similarity).</text>
</comment>
<comment type="subunit">
    <text evidence="1">Heterodimer of an alpha and a beta subunit.</text>
</comment>
<comment type="subcellular location">
    <subcellularLocation>
        <location evidence="1">Nucleus</location>
    </subcellularLocation>
</comment>
<comment type="similarity">
    <text evidence="3">Belongs to the TFIIF alpha subunit family.</text>
</comment>
<gene>
    <name type="primary">gtf2f1</name>
    <name type="ORF">DDB_G0279377</name>
</gene>
<name>T2FA_DICDI</name>
<evidence type="ECO:0000250" key="1"/>
<evidence type="ECO:0000256" key="2">
    <source>
        <dbReference type="SAM" id="MobiDB-lite"/>
    </source>
</evidence>
<evidence type="ECO:0000305" key="3"/>
<proteinExistence type="inferred from homology"/>
<feature type="chain" id="PRO_0000330919" description="General transcription factor IIF subunit 1">
    <location>
        <begin position="1"/>
        <end position="556"/>
    </location>
</feature>
<feature type="region of interest" description="Disordered" evidence="2">
    <location>
        <begin position="82"/>
        <end position="128"/>
    </location>
</feature>
<feature type="region of interest" description="Disordered" evidence="2">
    <location>
        <begin position="226"/>
        <end position="499"/>
    </location>
</feature>
<feature type="compositionally biased region" description="Low complexity" evidence="2">
    <location>
        <begin position="84"/>
        <end position="128"/>
    </location>
</feature>
<feature type="compositionally biased region" description="Basic and acidic residues" evidence="2">
    <location>
        <begin position="245"/>
        <end position="275"/>
    </location>
</feature>
<feature type="compositionally biased region" description="Acidic residues" evidence="2">
    <location>
        <begin position="291"/>
        <end position="338"/>
    </location>
</feature>
<feature type="compositionally biased region" description="Acidic residues" evidence="2">
    <location>
        <begin position="378"/>
        <end position="394"/>
    </location>
</feature>
<feature type="compositionally biased region" description="Basic and acidic residues" evidence="2">
    <location>
        <begin position="415"/>
        <end position="427"/>
    </location>
</feature>
<feature type="compositionally biased region" description="Basic and acidic residues" evidence="2">
    <location>
        <begin position="450"/>
        <end position="461"/>
    </location>
</feature>
<feature type="compositionally biased region" description="Low complexity" evidence="2">
    <location>
        <begin position="469"/>
        <end position="492"/>
    </location>
</feature>
<sequence length="556" mass="62219">MSESTNNPNEKTYKINLVKGTKKWNIAKFSNKIDLSSFSKPVRMYKFNPIANMINNESNNFGQPTTSTYTNNHYSYKNIQPTMTSAPNGTNSTGTTPNTTTTTTTTTTTTTTTTTAAGTPGAPNPAAATQPFVRKKRYEAKPVNPKTIPWKLEDSEGNNTYQGNVEGNQASSNYFLFMFQSDGSIKAVPCNDWYNFRPKKEFQSLTTEEAEDFMKKKNQEWDVFTSRLQKKTDPSGSGSGGSESSGKKSIEELEEAEHRNRNEDPNRYKTTNEEKKKKKAPARRREREDEGNGEDGDAPDFESKFDDDDDDTYMDGDGLTGEDENQIEEDEEEEDVDLTEGGLEMKKMIKKQQQQNDSEDDLADDDDKKDNNGGTGGGDDEDDDEDDEDPDQDDLSNLPKVFGKSNADGTTNSSVKKEDDGGKDSKSSKKSKKKDKDSSPKSKEKKSKKNKSDSSVDNRESKKIKKEPSSPQAVQPNSPSQQQQQQQQNIDPNDPPFTEEYIKIVLQKSKKVKSLDLINIFKGPLKNPDNKPIFLAMVHNVARVVEENGVKYLIPK</sequence>
<protein>
    <recommendedName>
        <fullName>General transcription factor IIF subunit 1</fullName>
    </recommendedName>
    <alternativeName>
        <fullName>Transcription initiation factor IIF subunit alpha</fullName>
        <shortName>TFIIF-alpha</shortName>
    </alternativeName>
</protein>
<reference key="1">
    <citation type="journal article" date="2005" name="Nature">
        <title>The genome of the social amoeba Dictyostelium discoideum.</title>
        <authorList>
            <person name="Eichinger L."/>
            <person name="Pachebat J.A."/>
            <person name="Gloeckner G."/>
            <person name="Rajandream M.A."/>
            <person name="Sucgang R."/>
            <person name="Berriman M."/>
            <person name="Song J."/>
            <person name="Olsen R."/>
            <person name="Szafranski K."/>
            <person name="Xu Q."/>
            <person name="Tunggal B."/>
            <person name="Kummerfeld S."/>
            <person name="Madera M."/>
            <person name="Konfortov B.A."/>
            <person name="Rivero F."/>
            <person name="Bankier A.T."/>
            <person name="Lehmann R."/>
            <person name="Hamlin N."/>
            <person name="Davies R."/>
            <person name="Gaudet P."/>
            <person name="Fey P."/>
            <person name="Pilcher K."/>
            <person name="Chen G."/>
            <person name="Saunders D."/>
            <person name="Sodergren E.J."/>
            <person name="Davis P."/>
            <person name="Kerhornou A."/>
            <person name="Nie X."/>
            <person name="Hall N."/>
            <person name="Anjard C."/>
            <person name="Hemphill L."/>
            <person name="Bason N."/>
            <person name="Farbrother P."/>
            <person name="Desany B."/>
            <person name="Just E."/>
            <person name="Morio T."/>
            <person name="Rost R."/>
            <person name="Churcher C.M."/>
            <person name="Cooper J."/>
            <person name="Haydock S."/>
            <person name="van Driessche N."/>
            <person name="Cronin A."/>
            <person name="Goodhead I."/>
            <person name="Muzny D.M."/>
            <person name="Mourier T."/>
            <person name="Pain A."/>
            <person name="Lu M."/>
            <person name="Harper D."/>
            <person name="Lindsay R."/>
            <person name="Hauser H."/>
            <person name="James K.D."/>
            <person name="Quiles M."/>
            <person name="Madan Babu M."/>
            <person name="Saito T."/>
            <person name="Buchrieser C."/>
            <person name="Wardroper A."/>
            <person name="Felder M."/>
            <person name="Thangavelu M."/>
            <person name="Johnson D."/>
            <person name="Knights A."/>
            <person name="Loulseged H."/>
            <person name="Mungall K.L."/>
            <person name="Oliver K."/>
            <person name="Price C."/>
            <person name="Quail M.A."/>
            <person name="Urushihara H."/>
            <person name="Hernandez J."/>
            <person name="Rabbinowitsch E."/>
            <person name="Steffen D."/>
            <person name="Sanders M."/>
            <person name="Ma J."/>
            <person name="Kohara Y."/>
            <person name="Sharp S."/>
            <person name="Simmonds M.N."/>
            <person name="Spiegler S."/>
            <person name="Tivey A."/>
            <person name="Sugano S."/>
            <person name="White B."/>
            <person name="Walker D."/>
            <person name="Woodward J.R."/>
            <person name="Winckler T."/>
            <person name="Tanaka Y."/>
            <person name="Shaulsky G."/>
            <person name="Schleicher M."/>
            <person name="Weinstock G.M."/>
            <person name="Rosenthal A."/>
            <person name="Cox E.C."/>
            <person name="Chisholm R.L."/>
            <person name="Gibbs R.A."/>
            <person name="Loomis W.F."/>
            <person name="Platzer M."/>
            <person name="Kay R.R."/>
            <person name="Williams J.G."/>
            <person name="Dear P.H."/>
            <person name="Noegel A.A."/>
            <person name="Barrell B.G."/>
            <person name="Kuspa A."/>
        </authorList>
    </citation>
    <scope>NUCLEOTIDE SEQUENCE [LARGE SCALE GENOMIC DNA]</scope>
    <source>
        <strain>AX4</strain>
    </source>
</reference>
<accession>Q54WV4</accession>
<dbReference type="EMBL" id="AAFI02000030">
    <property type="protein sequence ID" value="EAL67837.1"/>
    <property type="molecule type" value="Genomic_DNA"/>
</dbReference>
<dbReference type="RefSeq" id="XP_641828.1">
    <property type="nucleotide sequence ID" value="XM_636736.1"/>
</dbReference>
<dbReference type="FunCoup" id="Q54WV4">
    <property type="interactions" value="5"/>
</dbReference>
<dbReference type="STRING" id="44689.Q54WV4"/>
<dbReference type="GlyGen" id="Q54WV4">
    <property type="glycosylation" value="1 site"/>
</dbReference>
<dbReference type="PaxDb" id="44689-DDB0302526"/>
<dbReference type="EnsemblProtists" id="EAL67837">
    <property type="protein sequence ID" value="EAL67837"/>
    <property type="gene ID" value="DDB_G0279377"/>
</dbReference>
<dbReference type="GeneID" id="8622019"/>
<dbReference type="KEGG" id="ddi:DDB_G0279377"/>
<dbReference type="dictyBase" id="DDB_G0279377">
    <property type="gene designation" value="gtf2f1"/>
</dbReference>
<dbReference type="VEuPathDB" id="AmoebaDB:DDB_G0279377"/>
<dbReference type="eggNOG" id="KOG2393">
    <property type="taxonomic scope" value="Eukaryota"/>
</dbReference>
<dbReference type="HOGENOM" id="CLU_490421_0_0_1"/>
<dbReference type="InParanoid" id="Q54WV4"/>
<dbReference type="OMA" id="MERENNQ"/>
<dbReference type="Reactome" id="R-DDI-113418">
    <property type="pathway name" value="Formation of the Early Elongation Complex"/>
</dbReference>
<dbReference type="Reactome" id="R-DDI-674695">
    <property type="pathway name" value="RNA Polymerase II Pre-transcription Events"/>
</dbReference>
<dbReference type="Reactome" id="R-DDI-6796648">
    <property type="pathway name" value="TP53 Regulates Transcription of DNA Repair Genes"/>
</dbReference>
<dbReference type="Reactome" id="R-DDI-6807505">
    <property type="pathway name" value="RNA polymerase II transcribes snRNA genes"/>
</dbReference>
<dbReference type="Reactome" id="R-DDI-72086">
    <property type="pathway name" value="mRNA Capping"/>
</dbReference>
<dbReference type="Reactome" id="R-DDI-72163">
    <property type="pathway name" value="mRNA Splicing - Major Pathway"/>
</dbReference>
<dbReference type="Reactome" id="R-DDI-72203">
    <property type="pathway name" value="Processing of Capped Intron-Containing Pre-mRNA"/>
</dbReference>
<dbReference type="Reactome" id="R-DDI-73776">
    <property type="pathway name" value="RNA Polymerase II Promoter Escape"/>
</dbReference>
<dbReference type="Reactome" id="R-DDI-73779">
    <property type="pathway name" value="RNA Polymerase II Transcription Pre-Initiation And Promoter Opening"/>
</dbReference>
<dbReference type="Reactome" id="R-DDI-75953">
    <property type="pathway name" value="RNA Polymerase II Transcription Initiation"/>
</dbReference>
<dbReference type="Reactome" id="R-DDI-76042">
    <property type="pathway name" value="RNA Polymerase II Transcription Initiation And Promoter Clearance"/>
</dbReference>
<dbReference type="Reactome" id="R-DDI-77075">
    <property type="pathway name" value="RNA Pol II CTD phosphorylation and interaction with CE"/>
</dbReference>
<dbReference type="Reactome" id="R-DDI-9018519">
    <property type="pathway name" value="Estrogen-dependent gene expression"/>
</dbReference>
<dbReference type="PRO" id="PR:Q54WV4"/>
<dbReference type="Proteomes" id="UP000002195">
    <property type="component" value="Chromosome 3"/>
</dbReference>
<dbReference type="GO" id="GO:0005674">
    <property type="term" value="C:transcription factor TFIIF complex"/>
    <property type="evidence" value="ECO:0000318"/>
    <property type="project" value="GO_Central"/>
</dbReference>
<dbReference type="GO" id="GO:0003677">
    <property type="term" value="F:DNA binding"/>
    <property type="evidence" value="ECO:0007669"/>
    <property type="project" value="UniProtKB-KW"/>
</dbReference>
<dbReference type="GO" id="GO:0016251">
    <property type="term" value="F:RNA polymerase II general transcription initiation factor activity"/>
    <property type="evidence" value="ECO:0000318"/>
    <property type="project" value="GO_Central"/>
</dbReference>
<dbReference type="GO" id="GO:0001096">
    <property type="term" value="F:TFIIF-class transcription factor complex binding"/>
    <property type="evidence" value="ECO:0000318"/>
    <property type="project" value="GO_Central"/>
</dbReference>
<dbReference type="GO" id="GO:0032091">
    <property type="term" value="P:negative regulation of protein binding"/>
    <property type="evidence" value="ECO:0000250"/>
    <property type="project" value="UniProtKB"/>
</dbReference>
<dbReference type="GO" id="GO:0045944">
    <property type="term" value="P:positive regulation of transcription by RNA polymerase II"/>
    <property type="evidence" value="ECO:0000250"/>
    <property type="project" value="UniProtKB"/>
</dbReference>
<dbReference type="GO" id="GO:0032968">
    <property type="term" value="P:positive regulation of transcription elongation by RNA polymerase II"/>
    <property type="evidence" value="ECO:0007669"/>
    <property type="project" value="InterPro"/>
</dbReference>
<dbReference type="GO" id="GO:0006367">
    <property type="term" value="P:transcription initiation at RNA polymerase II promoter"/>
    <property type="evidence" value="ECO:0000318"/>
    <property type="project" value="GO_Central"/>
</dbReference>
<dbReference type="InterPro" id="IPR008851">
    <property type="entry name" value="TFIIF-alpha"/>
</dbReference>
<dbReference type="InterPro" id="IPR011039">
    <property type="entry name" value="TFIIF_interaction"/>
</dbReference>
<dbReference type="PANTHER" id="PTHR13011:SF0">
    <property type="entry name" value="GENERAL TRANSCRIPTION FACTOR IIF SUBUNIT 1"/>
    <property type="match status" value="1"/>
</dbReference>
<dbReference type="PANTHER" id="PTHR13011">
    <property type="entry name" value="TFIIF-ALPHA"/>
    <property type="match status" value="1"/>
</dbReference>
<dbReference type="Pfam" id="PF05793">
    <property type="entry name" value="TFIIF_alpha"/>
    <property type="match status" value="1"/>
</dbReference>
<dbReference type="SUPFAM" id="SSF50916">
    <property type="entry name" value="Rap30/74 interaction domains"/>
    <property type="match status" value="1"/>
</dbReference>
<keyword id="KW-0238">DNA-binding</keyword>
<keyword id="KW-0539">Nucleus</keyword>
<keyword id="KW-1185">Reference proteome</keyword>
<keyword id="KW-0804">Transcription</keyword>
<keyword id="KW-0805">Transcription regulation</keyword>